<protein>
    <recommendedName>
        <fullName>Protein SPT2</fullName>
    </recommendedName>
    <alternativeName>
        <fullName>Negative regulator of Ty transcription</fullName>
    </alternativeName>
</protein>
<feature type="initiator methionine" description="Removed" evidence="13">
    <location>
        <position position="1"/>
    </location>
</feature>
<feature type="chain" id="PRO_0000072163" description="Protein SPT2">
    <location>
        <begin position="2"/>
        <end position="333"/>
    </location>
</feature>
<feature type="region of interest" description="Disordered" evidence="2">
    <location>
        <begin position="1"/>
        <end position="38"/>
    </location>
</feature>
<feature type="region of interest" description="Disordered" evidence="2">
    <location>
        <begin position="61"/>
        <end position="264"/>
    </location>
</feature>
<feature type="region of interest" description="Important for interaction with histones" evidence="5">
    <location>
        <begin position="259"/>
        <end position="333"/>
    </location>
</feature>
<feature type="region of interest" description="Disordered" evidence="2">
    <location>
        <begin position="312"/>
        <end position="333"/>
    </location>
</feature>
<feature type="coiled-coil region" evidence="1">
    <location>
        <begin position="218"/>
        <end position="242"/>
    </location>
</feature>
<feature type="coiled-coil region" evidence="1">
    <location>
        <begin position="292"/>
        <end position="316"/>
    </location>
</feature>
<feature type="compositionally biased region" description="Polar residues" evidence="2">
    <location>
        <begin position="1"/>
        <end position="20"/>
    </location>
</feature>
<feature type="compositionally biased region" description="Basic and acidic residues" evidence="2">
    <location>
        <begin position="117"/>
        <end position="141"/>
    </location>
</feature>
<feature type="compositionally biased region" description="Low complexity" evidence="2">
    <location>
        <begin position="180"/>
        <end position="193"/>
    </location>
</feature>
<feature type="compositionally biased region" description="Basic and acidic residues" evidence="2">
    <location>
        <begin position="215"/>
        <end position="228"/>
    </location>
</feature>
<feature type="compositionally biased region" description="Acidic residues" evidence="2">
    <location>
        <begin position="229"/>
        <end position="247"/>
    </location>
</feature>
<feature type="compositionally biased region" description="Basic and acidic residues" evidence="2">
    <location>
        <begin position="312"/>
        <end position="325"/>
    </location>
</feature>
<feature type="modified residue" description="N-acetylserine" evidence="13">
    <location>
        <position position="2"/>
    </location>
</feature>
<feature type="modified residue" description="Phosphoserine" evidence="12">
    <location>
        <position position="126"/>
    </location>
</feature>
<feature type="mutagenesis site" description="Strongly reduces histone binding." evidence="5">
    <original>ME</original>
    <variation>AA</variation>
    <location>
        <begin position="289"/>
        <end position="290"/>
    </location>
</feature>
<feature type="mutagenesis site" description="Strongly reduces histone binding." evidence="5">
    <original>EE</original>
    <variation>AA</variation>
    <location>
        <begin position="299"/>
        <end position="300"/>
    </location>
</feature>
<feature type="mutagenesis site" description="Strongly reduces histone binding." evidence="5">
    <original>ED</original>
    <variation>AA</variation>
    <location>
        <begin position="310"/>
        <end position="311"/>
    </location>
</feature>
<comment type="function">
    <text evidence="4 5">Histone chaperone that stabilizes pre-existing histone tetramers and regulates replication-independent histone exchange on chromatin (PubMed:26109053). Required for normal chromatin refolding in the coding region of transcribed genes, and for the suppression of spurious transcription (PubMed:26109053). Global regulatory protein that plays positive as well as negative regulatory roles in transcription (PubMed:2072912).</text>
</comment>
<comment type="subunit">
    <text evidence="5 6 7 8">Interacts with tetramers formed by histone H3 and H4 (PubMed:26109053). Interacts with SAP1 and CDC23 (PubMed:8654588, PubMed:8710860). Component of the SAGA complex, a large multiprotein complex that modifies the chromatin, at least composed of SPT2, SPT7, SPT8, SPT20/ADA5, HFI1/ADA1, ADA2, ADA3/NGG1, TRA1 and GCN5 (PubMed:9885573).</text>
</comment>
<comment type="subcellular location">
    <subcellularLocation>
        <location evidence="4 5">Nucleus</location>
    </subcellularLocation>
</comment>
<comment type="domain">
    <text evidence="5">The acidic C-terminal domain mediates interaction with histone H3/H4 complexes.</text>
</comment>
<comment type="miscellaneous">
    <text evidence="3">Present with 1240 molecules/cell in log phase SD medium.</text>
</comment>
<comment type="similarity">
    <text evidence="11">Belongs to the SPT2 family.</text>
</comment>
<evidence type="ECO:0000255" key="1"/>
<evidence type="ECO:0000256" key="2">
    <source>
        <dbReference type="SAM" id="MobiDB-lite"/>
    </source>
</evidence>
<evidence type="ECO:0000269" key="3">
    <source>
    </source>
</evidence>
<evidence type="ECO:0000269" key="4">
    <source>
    </source>
</evidence>
<evidence type="ECO:0000269" key="5">
    <source>
    </source>
</evidence>
<evidence type="ECO:0000269" key="6">
    <source>
    </source>
</evidence>
<evidence type="ECO:0000269" key="7">
    <source>
    </source>
</evidence>
<evidence type="ECO:0000269" key="8">
    <source>
    </source>
</evidence>
<evidence type="ECO:0000303" key="9">
    <source>
    </source>
</evidence>
<evidence type="ECO:0000303" key="10">
    <source>
    </source>
</evidence>
<evidence type="ECO:0000305" key="11"/>
<evidence type="ECO:0007744" key="12">
    <source>
    </source>
</evidence>
<evidence type="ECO:0007744" key="13">
    <source>
    </source>
</evidence>
<sequence length="333" mass="38551">MSFLSKLSQIRKSTTASKAQVQDPLPKKNDEEYSLLPKNYIRDEDPAVKRLKELRRQELLKNGALAKKSGVKRKRGTSSGSEKKKIERNDDDEGGLGIRFKRSIGASHAPLKPVVRKKPEPIKKMSFEELMKQAENNEKQPPKVKSSEPVTKERPHFNKPGFKSSKRPQKKASPGATLRGVSSGGNSIKSSDSPKPVKLNLPTNGFAQPNRRLKEKLESRKQKSRYQDDYDEEDNDMDDFIEDDEDEGYHSKSKHSNGPGYDRDEIWAMFNRGKKRSEYDYDELEDDDMEANEMEILEEEEMARKMARLEDKREEAWLKKHEEEKRRRKKGIR</sequence>
<proteinExistence type="evidence at protein level"/>
<gene>
    <name type="primary">SPT2</name>
    <name evidence="9 10" type="synonym">SIN1</name>
    <name type="synonym">SPM2</name>
    <name type="ordered locus">YER161C</name>
</gene>
<reference key="1">
    <citation type="journal article" date="1985" name="Mol. Cell. Biol.">
        <title>Isolation and characterization of the SPT2 gene, a negative regulator of Ty-controlled yeast gene expression.</title>
        <authorList>
            <person name="Roeder G.S."/>
            <person name="Beard C."/>
            <person name="Smith M."/>
            <person name="Keranen S."/>
        </authorList>
    </citation>
    <scope>NUCLEOTIDE SEQUENCE [GENOMIC DNA]</scope>
</reference>
<reference key="2">
    <citation type="journal article" date="1991" name="Mol. Cell. Biol.">
        <title>A negative regulator of HO transcription, SIN1 (SPT2), is a nonspecific DNA-binding protein related to HMG1.</title>
        <authorList>
            <person name="Kruger W."/>
            <person name="Herskowitz I."/>
        </authorList>
    </citation>
    <scope>NUCLEOTIDE SEQUENCE [GENOMIC DNA]</scope>
    <scope>FUNCTION</scope>
    <scope>SUBCELLULAR LOCATION</scope>
    <scope>DNA-BINDING</scope>
</reference>
<reference key="3">
    <citation type="journal article" date="1997" name="Nature">
        <title>The nucleotide sequence of Saccharomyces cerevisiae chromosome V.</title>
        <authorList>
            <person name="Dietrich F.S."/>
            <person name="Mulligan J.T."/>
            <person name="Hennessy K.M."/>
            <person name="Yelton M.A."/>
            <person name="Allen E."/>
            <person name="Araujo R."/>
            <person name="Aviles E."/>
            <person name="Berno A."/>
            <person name="Brennan T."/>
            <person name="Carpenter J."/>
            <person name="Chen E."/>
            <person name="Cherry J.M."/>
            <person name="Chung E."/>
            <person name="Duncan M."/>
            <person name="Guzman E."/>
            <person name="Hartzell G."/>
            <person name="Hunicke-Smith S."/>
            <person name="Hyman R.W."/>
            <person name="Kayser A."/>
            <person name="Komp C."/>
            <person name="Lashkari D."/>
            <person name="Lew H."/>
            <person name="Lin D."/>
            <person name="Mosedale D."/>
            <person name="Nakahara K."/>
            <person name="Namath A."/>
            <person name="Norgren R."/>
            <person name="Oefner P."/>
            <person name="Oh C."/>
            <person name="Petel F.X."/>
            <person name="Roberts D."/>
            <person name="Sehl P."/>
            <person name="Schramm S."/>
            <person name="Shogren T."/>
            <person name="Smith V."/>
            <person name="Taylor P."/>
            <person name="Wei Y."/>
            <person name="Botstein D."/>
            <person name="Davis R.W."/>
        </authorList>
    </citation>
    <scope>NUCLEOTIDE SEQUENCE [LARGE SCALE GENOMIC DNA]</scope>
    <source>
        <strain>ATCC 204508 / S288c</strain>
    </source>
</reference>
<reference key="4">
    <citation type="journal article" date="2014" name="G3 (Bethesda)">
        <title>The reference genome sequence of Saccharomyces cerevisiae: Then and now.</title>
        <authorList>
            <person name="Engel S.R."/>
            <person name="Dietrich F.S."/>
            <person name="Fisk D.G."/>
            <person name="Binkley G."/>
            <person name="Balakrishnan R."/>
            <person name="Costanzo M.C."/>
            <person name="Dwight S.S."/>
            <person name="Hitz B.C."/>
            <person name="Karra K."/>
            <person name="Nash R.S."/>
            <person name="Weng S."/>
            <person name="Wong E.D."/>
            <person name="Lloyd P."/>
            <person name="Skrzypek M.S."/>
            <person name="Miyasato S.R."/>
            <person name="Simison M."/>
            <person name="Cherry J.M."/>
        </authorList>
    </citation>
    <scope>GENOME REANNOTATION</scope>
    <source>
        <strain>ATCC 204508 / S288c</strain>
    </source>
</reference>
<reference key="5">
    <citation type="journal article" date="1996" name="FEBS Lett.">
        <title>Association of yeast SAP1, a novel member of the 'AAA' ATPase family of proteins, with the chromatin protein SIN1.</title>
        <authorList>
            <person name="Liberzon A."/>
            <person name="Shpungin S."/>
            <person name="Bangio H."/>
            <person name="Yona E."/>
            <person name="Katcoff D.J."/>
        </authorList>
    </citation>
    <scope>INTERACTION WITH SAP1</scope>
</reference>
<reference key="6">
    <citation type="journal article" date="1996" name="Proc. Natl. Acad. Sci. U.S.A.">
        <title>Association of yeast SIN1 with the tetratrico peptide repeats of CDC23.</title>
        <authorList>
            <person name="Shpungin S."/>
            <person name="Liberzon A."/>
            <person name="Bangio H."/>
            <person name="Yona E."/>
            <person name="Katcoff D.J."/>
        </authorList>
    </citation>
    <scope>INTERACTION WITH CDC23</scope>
</reference>
<reference key="7">
    <citation type="journal article" date="1998" name="Mol. Cell">
        <title>The ATM-related cofactor Tra1 is a component of the purified SAGA complex.</title>
        <authorList>
            <person name="Grant P.A."/>
            <person name="Schieltz D."/>
            <person name="Pray-Grant M.G."/>
            <person name="Yates J.R. III"/>
            <person name="Workman J.L."/>
        </authorList>
    </citation>
    <scope>IDENTIFICATION IN A SAGA COMPLEX WITH SPT7; HFI1; SPT8; GCN5; SPT20; ADA2; ADA3 AND TRA1</scope>
</reference>
<reference key="8">
    <citation type="journal article" date="2003" name="Nature">
        <title>Global analysis of protein expression in yeast.</title>
        <authorList>
            <person name="Ghaemmaghami S."/>
            <person name="Huh W.-K."/>
            <person name="Bower K."/>
            <person name="Howson R.W."/>
            <person name="Belle A."/>
            <person name="Dephoure N."/>
            <person name="O'Shea E.K."/>
            <person name="Weissman J.S."/>
        </authorList>
    </citation>
    <scope>LEVEL OF PROTEIN EXPRESSION [LARGE SCALE ANALYSIS]</scope>
</reference>
<reference key="9">
    <citation type="journal article" date="2008" name="Mol. Cell. Proteomics">
        <title>A multidimensional chromatography technology for in-depth phosphoproteome analysis.</title>
        <authorList>
            <person name="Albuquerque C.P."/>
            <person name="Smolka M.B."/>
            <person name="Payne S.H."/>
            <person name="Bafna V."/>
            <person name="Eng J."/>
            <person name="Zhou H."/>
        </authorList>
    </citation>
    <scope>PHOSPHORYLATION [LARGE SCALE ANALYSIS] AT SER-126</scope>
    <scope>IDENTIFICATION BY MASS SPECTROMETRY [LARGE SCALE ANALYSIS]</scope>
</reference>
<reference key="10">
    <citation type="journal article" date="2012" name="Proc. Natl. Acad. Sci. U.S.A.">
        <title>N-terminal acetylome analyses and functional insights of the N-terminal acetyltransferase NatB.</title>
        <authorList>
            <person name="Van Damme P."/>
            <person name="Lasa M."/>
            <person name="Polevoda B."/>
            <person name="Gazquez C."/>
            <person name="Elosegui-Artola A."/>
            <person name="Kim D.S."/>
            <person name="De Juan-Pardo E."/>
            <person name="Demeyer K."/>
            <person name="Hole K."/>
            <person name="Larrea E."/>
            <person name="Timmerman E."/>
            <person name="Prieto J."/>
            <person name="Arnesen T."/>
            <person name="Sherman F."/>
            <person name="Gevaert K."/>
            <person name="Aldabe R."/>
        </authorList>
    </citation>
    <scope>ACETYLATION [LARGE SCALE ANALYSIS] AT SER-2</scope>
    <scope>CLEAVAGE OF INITIATOR METHIONINE [LARGE SCALE ANALYSIS]</scope>
    <scope>IDENTIFICATION BY MASS SPECTROMETRY [LARGE SCALE ANALYSIS]</scope>
</reference>
<reference key="11">
    <citation type="journal article" date="2015" name="Genes Dev.">
        <title>Structure-function studies of histone H3/H4 tetramer maintenance during transcription by chaperone Spt2.</title>
        <authorList>
            <person name="Chen S."/>
            <person name="Rufiange A."/>
            <person name="Huang H."/>
            <person name="Rajashankar K.R."/>
            <person name="Nourani A."/>
            <person name="Patel D.J."/>
        </authorList>
    </citation>
    <scope>INTERACTION WITH HISTONE H3 AND H4</scope>
    <scope>DOMAIN</scope>
    <scope>SUBCELLULAR LOCATION</scope>
    <scope>MUTAGENESIS OF 289-MET-GLU-290; 299-GLU-GLU-300 AND 310-GLU-ASP-311</scope>
</reference>
<dbReference type="EMBL" id="M11165">
    <property type="protein sequence ID" value="AAA35083.1"/>
    <property type="molecule type" value="Genomic_DNA"/>
</dbReference>
<dbReference type="EMBL" id="U18917">
    <property type="protein sequence ID" value="AAB64688.1"/>
    <property type="molecule type" value="Genomic_DNA"/>
</dbReference>
<dbReference type="EMBL" id="BK006939">
    <property type="protein sequence ID" value="DAA07823.1"/>
    <property type="molecule type" value="Genomic_DNA"/>
</dbReference>
<dbReference type="PIR" id="A23438">
    <property type="entry name" value="A23438"/>
</dbReference>
<dbReference type="RefSeq" id="NP_011088.1">
    <property type="nucleotide sequence ID" value="NM_001179051.1"/>
</dbReference>
<dbReference type="SMR" id="P06843"/>
<dbReference type="BioGRID" id="36914">
    <property type="interactions" value="311"/>
</dbReference>
<dbReference type="DIP" id="DIP-1657N"/>
<dbReference type="FunCoup" id="P06843">
    <property type="interactions" value="607"/>
</dbReference>
<dbReference type="IntAct" id="P06843">
    <property type="interactions" value="41"/>
</dbReference>
<dbReference type="MINT" id="P06843"/>
<dbReference type="STRING" id="4932.YER161C"/>
<dbReference type="iPTMnet" id="P06843"/>
<dbReference type="PaxDb" id="4932-YER161C"/>
<dbReference type="PeptideAtlas" id="P06843"/>
<dbReference type="EnsemblFungi" id="YER161C_mRNA">
    <property type="protein sequence ID" value="YER161C"/>
    <property type="gene ID" value="YER161C"/>
</dbReference>
<dbReference type="GeneID" id="856908"/>
<dbReference type="KEGG" id="sce:YER161C"/>
<dbReference type="AGR" id="SGD:S000000963"/>
<dbReference type="SGD" id="S000000963">
    <property type="gene designation" value="SPT2"/>
</dbReference>
<dbReference type="VEuPathDB" id="FungiDB:YER161C"/>
<dbReference type="eggNOG" id="ENOG502QRG5">
    <property type="taxonomic scope" value="Eukaryota"/>
</dbReference>
<dbReference type="HOGENOM" id="CLU_069667_1_0_1"/>
<dbReference type="InParanoid" id="P06843"/>
<dbReference type="OMA" id="IWAMFNR"/>
<dbReference type="OrthoDB" id="4035998at2759"/>
<dbReference type="BioCyc" id="YEAST:G3O-30322-MONOMER"/>
<dbReference type="BioGRID-ORCS" id="856908">
    <property type="hits" value="0 hits in 10 CRISPR screens"/>
</dbReference>
<dbReference type="PRO" id="PR:P06843"/>
<dbReference type="Proteomes" id="UP000002311">
    <property type="component" value="Chromosome V"/>
</dbReference>
<dbReference type="RNAct" id="P06843">
    <property type="molecule type" value="protein"/>
</dbReference>
<dbReference type="GO" id="GO:0005829">
    <property type="term" value="C:cytosol"/>
    <property type="evidence" value="ECO:0000314"/>
    <property type="project" value="SGD"/>
</dbReference>
<dbReference type="GO" id="GO:0005634">
    <property type="term" value="C:nucleus"/>
    <property type="evidence" value="ECO:0000314"/>
    <property type="project" value="UniProtKB"/>
</dbReference>
<dbReference type="GO" id="GO:0003677">
    <property type="term" value="F:DNA binding"/>
    <property type="evidence" value="ECO:0000314"/>
    <property type="project" value="SGD"/>
</dbReference>
<dbReference type="GO" id="GO:0000217">
    <property type="term" value="F:DNA secondary structure binding"/>
    <property type="evidence" value="ECO:0000314"/>
    <property type="project" value="SGD"/>
</dbReference>
<dbReference type="GO" id="GO:0042393">
    <property type="term" value="F:histone binding"/>
    <property type="evidence" value="ECO:0000314"/>
    <property type="project" value="UniProtKB"/>
</dbReference>
<dbReference type="GO" id="GO:0140713">
    <property type="term" value="F:histone chaperone activity"/>
    <property type="evidence" value="ECO:0000315"/>
    <property type="project" value="GO_Central"/>
</dbReference>
<dbReference type="GO" id="GO:0006325">
    <property type="term" value="P:chromatin organization"/>
    <property type="evidence" value="ECO:0000315"/>
    <property type="project" value="SGD"/>
</dbReference>
<dbReference type="GO" id="GO:0031507">
    <property type="term" value="P:heterochromatin formation"/>
    <property type="evidence" value="ECO:0000315"/>
    <property type="project" value="GO_Central"/>
</dbReference>
<dbReference type="GO" id="GO:0000122">
    <property type="term" value="P:negative regulation of transcription by RNA polymerase II"/>
    <property type="evidence" value="ECO:0000315"/>
    <property type="project" value="SGD"/>
</dbReference>
<dbReference type="GO" id="GO:0006355">
    <property type="term" value="P:regulation of DNA-templated transcription"/>
    <property type="evidence" value="ECO:0000315"/>
    <property type="project" value="UniProtKB"/>
</dbReference>
<dbReference type="GO" id="GO:0140673">
    <property type="term" value="P:transcription elongation-coupled chromatin remodeling"/>
    <property type="evidence" value="ECO:0000316"/>
    <property type="project" value="SGD"/>
</dbReference>
<dbReference type="InterPro" id="IPR013256">
    <property type="entry name" value="Chromatin_SPT2"/>
</dbReference>
<dbReference type="Pfam" id="PF08243">
    <property type="entry name" value="SPT2"/>
    <property type="match status" value="1"/>
</dbReference>
<dbReference type="SMART" id="SM00784">
    <property type="entry name" value="SPT2"/>
    <property type="match status" value="1"/>
</dbReference>
<name>SPT2_YEAST</name>
<organism>
    <name type="scientific">Saccharomyces cerevisiae (strain ATCC 204508 / S288c)</name>
    <name type="common">Baker's yeast</name>
    <dbReference type="NCBI Taxonomy" id="559292"/>
    <lineage>
        <taxon>Eukaryota</taxon>
        <taxon>Fungi</taxon>
        <taxon>Dikarya</taxon>
        <taxon>Ascomycota</taxon>
        <taxon>Saccharomycotina</taxon>
        <taxon>Saccharomycetes</taxon>
        <taxon>Saccharomycetales</taxon>
        <taxon>Saccharomycetaceae</taxon>
        <taxon>Saccharomyces</taxon>
    </lineage>
</organism>
<accession>P06843</accession>
<accession>D3DM69</accession>
<keyword id="KW-0007">Acetylation</keyword>
<keyword id="KW-0010">Activator</keyword>
<keyword id="KW-0175">Coiled coil</keyword>
<keyword id="KW-0238">DNA-binding</keyword>
<keyword id="KW-0539">Nucleus</keyword>
<keyword id="KW-0597">Phosphoprotein</keyword>
<keyword id="KW-1185">Reference proteome</keyword>
<keyword id="KW-0678">Repressor</keyword>
<keyword id="KW-0804">Transcription</keyword>
<keyword id="KW-0805">Transcription regulation</keyword>